<gene>
    <name evidence="1" type="primary">alaS</name>
    <name type="ordered locus">tll2103</name>
</gene>
<protein>
    <recommendedName>
        <fullName evidence="1">Alanine--tRNA ligase</fullName>
        <ecNumber evidence="1">6.1.1.7</ecNumber>
    </recommendedName>
    <alternativeName>
        <fullName evidence="1">Alanyl-tRNA synthetase</fullName>
        <shortName evidence="1">AlaRS</shortName>
    </alternativeName>
</protein>
<keyword id="KW-0030">Aminoacyl-tRNA synthetase</keyword>
<keyword id="KW-0067">ATP-binding</keyword>
<keyword id="KW-0963">Cytoplasm</keyword>
<keyword id="KW-0436">Ligase</keyword>
<keyword id="KW-0479">Metal-binding</keyword>
<keyword id="KW-0547">Nucleotide-binding</keyword>
<keyword id="KW-0648">Protein biosynthesis</keyword>
<keyword id="KW-1185">Reference proteome</keyword>
<keyword id="KW-0694">RNA-binding</keyword>
<keyword id="KW-0820">tRNA-binding</keyword>
<keyword id="KW-0862">Zinc</keyword>
<reference key="1">
    <citation type="journal article" date="2002" name="DNA Res.">
        <title>Complete genome structure of the thermophilic cyanobacterium Thermosynechococcus elongatus BP-1.</title>
        <authorList>
            <person name="Nakamura Y."/>
            <person name="Kaneko T."/>
            <person name="Sato S."/>
            <person name="Ikeuchi M."/>
            <person name="Katoh H."/>
            <person name="Sasamoto S."/>
            <person name="Watanabe A."/>
            <person name="Iriguchi M."/>
            <person name="Kawashima K."/>
            <person name="Kimura T."/>
            <person name="Kishida Y."/>
            <person name="Kiyokawa C."/>
            <person name="Kohara M."/>
            <person name="Matsumoto M."/>
            <person name="Matsuno A."/>
            <person name="Nakazaki N."/>
            <person name="Shimpo S."/>
            <person name="Sugimoto M."/>
            <person name="Takeuchi C."/>
            <person name="Yamada M."/>
            <person name="Tabata S."/>
        </authorList>
    </citation>
    <scope>NUCLEOTIDE SEQUENCE [LARGE SCALE GENOMIC DNA]</scope>
    <source>
        <strain>NIES-2133 / IAM M-273 / BP-1</strain>
    </source>
</reference>
<feature type="chain" id="PRO_0000075226" description="Alanine--tRNA ligase">
    <location>
        <begin position="1"/>
        <end position="882"/>
    </location>
</feature>
<feature type="binding site" evidence="1">
    <location>
        <position position="567"/>
    </location>
    <ligand>
        <name>Zn(2+)</name>
        <dbReference type="ChEBI" id="CHEBI:29105"/>
    </ligand>
</feature>
<feature type="binding site" evidence="1">
    <location>
        <position position="571"/>
    </location>
    <ligand>
        <name>Zn(2+)</name>
        <dbReference type="ChEBI" id="CHEBI:29105"/>
    </ligand>
</feature>
<feature type="binding site" evidence="1">
    <location>
        <position position="669"/>
    </location>
    <ligand>
        <name>Zn(2+)</name>
        <dbReference type="ChEBI" id="CHEBI:29105"/>
    </ligand>
</feature>
<feature type="binding site" evidence="1">
    <location>
        <position position="673"/>
    </location>
    <ligand>
        <name>Zn(2+)</name>
        <dbReference type="ChEBI" id="CHEBI:29105"/>
    </ligand>
</feature>
<comment type="function">
    <text evidence="1">Catalyzes the attachment of alanine to tRNA(Ala) in a two-step reaction: alanine is first activated by ATP to form Ala-AMP and then transferred to the acceptor end of tRNA(Ala). Also edits incorrectly charged Ser-tRNA(Ala) and Gly-tRNA(Ala) via its editing domain.</text>
</comment>
<comment type="catalytic activity">
    <reaction evidence="1">
        <text>tRNA(Ala) + L-alanine + ATP = L-alanyl-tRNA(Ala) + AMP + diphosphate</text>
        <dbReference type="Rhea" id="RHEA:12540"/>
        <dbReference type="Rhea" id="RHEA-COMP:9657"/>
        <dbReference type="Rhea" id="RHEA-COMP:9923"/>
        <dbReference type="ChEBI" id="CHEBI:30616"/>
        <dbReference type="ChEBI" id="CHEBI:33019"/>
        <dbReference type="ChEBI" id="CHEBI:57972"/>
        <dbReference type="ChEBI" id="CHEBI:78442"/>
        <dbReference type="ChEBI" id="CHEBI:78497"/>
        <dbReference type="ChEBI" id="CHEBI:456215"/>
        <dbReference type="EC" id="6.1.1.7"/>
    </reaction>
</comment>
<comment type="cofactor">
    <cofactor evidence="1">
        <name>Zn(2+)</name>
        <dbReference type="ChEBI" id="CHEBI:29105"/>
    </cofactor>
    <text evidence="1">Binds 1 zinc ion per subunit.</text>
</comment>
<comment type="subcellular location">
    <subcellularLocation>
        <location evidence="1">Cytoplasm</location>
    </subcellularLocation>
</comment>
<comment type="domain">
    <text evidence="1">Consists of three domains; the N-terminal catalytic domain, the editing domain and the C-terminal C-Ala domain. The editing domain removes incorrectly charged amino acids, while the C-Ala domain, along with tRNA(Ala), serves as a bridge to cooperatively bring together the editing and aminoacylation centers thus stimulating deacylation of misacylated tRNAs.</text>
</comment>
<comment type="similarity">
    <text evidence="1">Belongs to the class-II aminoacyl-tRNA synthetase family.</text>
</comment>
<comment type="sequence caution" evidence="2">
    <conflict type="erroneous initiation">
        <sequence resource="EMBL-CDS" id="BAC09655"/>
    </conflict>
</comment>
<sequence>MTALTGDQIRQKFLDFYAAKGHTILPSASLIPDDPTVLLTIAGMLPFKPIFLGQEAPKVPRATTAQKCLRTNDIENVGRTARHHTFFEMLGNFSFGDYFKGEAIAWAWELMTTVYGLPPERLLVSVFENDDEAYDIWHRQVGLPKERIQRMGEESNFWTAGPTGPCGPCSEIYYDFYPEKGLANVDLDDDGRFIELYNLVFMELNQDDQGHRTPLKAKNIDTGMGLERMAQVLQGVPNNYETDLIFPIIEAAAQRAGIQYQKANASTQTSLKVIGDHTRAVVHLIADGVTASNVGRGYVLRRLIRRIVRHSRLLGINGLVTPDLAQVAIDLAANVYPNVRERQAVILSELQREEEQFLKTLDRGEKLLAEMLSPLKKAKGKKRSQPQLAGRDAFVLFDTYGFPLELTQEIAAEQGIGVDVAEFEACMAEQRQRSQAAHETIDVTVQEGIDSLGDQLHPTQFRGYEELSLTTTVTAILVAGHPATTATAGTEVQVILEATPFYAESGGQIGDRGYLASSDALVHIHDVQKQKELFVHYGKVERGSLKVGDRVSAQIDLSCRRRVQAHHTATHLLQAALKKLIDENISQAGSLVAFDRLRFDFNCPRPLTREELQQIEDQINAWISESHTTHTYIMALSEAKAKGAIAMFGEKYGEQVRVLDIPGVSMELCGGTHVHNTAEIGLFKIISESGVAAGIRRIEAIAGAAVRDYLQQRDSIVRELCDRFKAKPEEILDRISQLQADLKAQQKALEHLKAELALAKTQALLEQAKPVGNSHVLIASLAGVDPQGLKTAAEWLLNKLGSGAVVLATQPAADKVNLLVAASQDVVQRGVHAGQLVAALAQVCGGRGGGRPNFAQAGGSQPAKLAEALELAHSRLKEILES</sequence>
<organism>
    <name type="scientific">Thermosynechococcus vestitus (strain NIES-2133 / IAM M-273 / BP-1)</name>
    <dbReference type="NCBI Taxonomy" id="197221"/>
    <lineage>
        <taxon>Bacteria</taxon>
        <taxon>Bacillati</taxon>
        <taxon>Cyanobacteriota</taxon>
        <taxon>Cyanophyceae</taxon>
        <taxon>Acaryochloridales</taxon>
        <taxon>Thermosynechococcaceae</taxon>
        <taxon>Thermosynechococcus</taxon>
    </lineage>
</organism>
<dbReference type="EC" id="6.1.1.7" evidence="1"/>
<dbReference type="EMBL" id="BA000039">
    <property type="protein sequence ID" value="BAC09655.1"/>
    <property type="status" value="ALT_INIT"/>
    <property type="molecule type" value="Genomic_DNA"/>
</dbReference>
<dbReference type="RefSeq" id="NP_682893.1">
    <property type="nucleotide sequence ID" value="NC_004113.1"/>
</dbReference>
<dbReference type="RefSeq" id="WP_011057938.1">
    <property type="nucleotide sequence ID" value="NC_004113.1"/>
</dbReference>
<dbReference type="SMR" id="Q8DH56"/>
<dbReference type="STRING" id="197221.gene:10748714"/>
<dbReference type="EnsemblBacteria" id="BAC09655">
    <property type="protein sequence ID" value="BAC09655"/>
    <property type="gene ID" value="BAC09655"/>
</dbReference>
<dbReference type="KEGG" id="tel:tll2103"/>
<dbReference type="PATRIC" id="fig|197221.4.peg.2201"/>
<dbReference type="eggNOG" id="COG0013">
    <property type="taxonomic scope" value="Bacteria"/>
</dbReference>
<dbReference type="Proteomes" id="UP000000440">
    <property type="component" value="Chromosome"/>
</dbReference>
<dbReference type="GO" id="GO:0005829">
    <property type="term" value="C:cytosol"/>
    <property type="evidence" value="ECO:0007669"/>
    <property type="project" value="TreeGrafter"/>
</dbReference>
<dbReference type="GO" id="GO:0004813">
    <property type="term" value="F:alanine-tRNA ligase activity"/>
    <property type="evidence" value="ECO:0007669"/>
    <property type="project" value="UniProtKB-UniRule"/>
</dbReference>
<dbReference type="GO" id="GO:0002161">
    <property type="term" value="F:aminoacyl-tRNA deacylase activity"/>
    <property type="evidence" value="ECO:0007669"/>
    <property type="project" value="TreeGrafter"/>
</dbReference>
<dbReference type="GO" id="GO:0005524">
    <property type="term" value="F:ATP binding"/>
    <property type="evidence" value="ECO:0007669"/>
    <property type="project" value="UniProtKB-UniRule"/>
</dbReference>
<dbReference type="GO" id="GO:0000049">
    <property type="term" value="F:tRNA binding"/>
    <property type="evidence" value="ECO:0007669"/>
    <property type="project" value="UniProtKB-KW"/>
</dbReference>
<dbReference type="GO" id="GO:0008270">
    <property type="term" value="F:zinc ion binding"/>
    <property type="evidence" value="ECO:0007669"/>
    <property type="project" value="UniProtKB-UniRule"/>
</dbReference>
<dbReference type="GO" id="GO:0006419">
    <property type="term" value="P:alanyl-tRNA aminoacylation"/>
    <property type="evidence" value="ECO:0007669"/>
    <property type="project" value="UniProtKB-UniRule"/>
</dbReference>
<dbReference type="CDD" id="cd00673">
    <property type="entry name" value="AlaRS_core"/>
    <property type="match status" value="1"/>
</dbReference>
<dbReference type="FunFam" id="2.40.30.130:FF:000001">
    <property type="entry name" value="Alanine--tRNA ligase"/>
    <property type="match status" value="1"/>
</dbReference>
<dbReference type="FunFam" id="3.10.310.40:FF:000001">
    <property type="entry name" value="Alanine--tRNA ligase"/>
    <property type="match status" value="1"/>
</dbReference>
<dbReference type="FunFam" id="3.30.54.20:FF:000001">
    <property type="entry name" value="Alanine--tRNA ligase"/>
    <property type="match status" value="1"/>
</dbReference>
<dbReference type="FunFam" id="3.30.930.10:FF:000004">
    <property type="entry name" value="Alanine--tRNA ligase"/>
    <property type="match status" value="1"/>
</dbReference>
<dbReference type="FunFam" id="3.30.980.10:FF:000004">
    <property type="entry name" value="Alanine--tRNA ligase, cytoplasmic"/>
    <property type="match status" value="1"/>
</dbReference>
<dbReference type="Gene3D" id="2.40.30.130">
    <property type="match status" value="1"/>
</dbReference>
<dbReference type="Gene3D" id="3.10.310.40">
    <property type="match status" value="1"/>
</dbReference>
<dbReference type="Gene3D" id="3.30.54.20">
    <property type="match status" value="1"/>
</dbReference>
<dbReference type="Gene3D" id="6.10.250.550">
    <property type="match status" value="1"/>
</dbReference>
<dbReference type="Gene3D" id="3.30.930.10">
    <property type="entry name" value="Bira Bifunctional Protein, Domain 2"/>
    <property type="match status" value="1"/>
</dbReference>
<dbReference type="Gene3D" id="3.30.980.10">
    <property type="entry name" value="Threonyl-trna Synthetase, Chain A, domain 2"/>
    <property type="match status" value="1"/>
</dbReference>
<dbReference type="HAMAP" id="MF_00036_B">
    <property type="entry name" value="Ala_tRNA_synth_B"/>
    <property type="match status" value="1"/>
</dbReference>
<dbReference type="InterPro" id="IPR045864">
    <property type="entry name" value="aa-tRNA-synth_II/BPL/LPL"/>
</dbReference>
<dbReference type="InterPro" id="IPR002318">
    <property type="entry name" value="Ala-tRNA-lgiase_IIc"/>
</dbReference>
<dbReference type="InterPro" id="IPR018162">
    <property type="entry name" value="Ala-tRNA-ligase_IIc_anticod-bd"/>
</dbReference>
<dbReference type="InterPro" id="IPR018165">
    <property type="entry name" value="Ala-tRNA-synth_IIc_core"/>
</dbReference>
<dbReference type="InterPro" id="IPR018164">
    <property type="entry name" value="Ala-tRNA-synth_IIc_N"/>
</dbReference>
<dbReference type="InterPro" id="IPR050058">
    <property type="entry name" value="Ala-tRNA_ligase"/>
</dbReference>
<dbReference type="InterPro" id="IPR023033">
    <property type="entry name" value="Ala_tRNA_ligase_euk/bac"/>
</dbReference>
<dbReference type="InterPro" id="IPR003156">
    <property type="entry name" value="DHHA1_dom"/>
</dbReference>
<dbReference type="InterPro" id="IPR018163">
    <property type="entry name" value="Thr/Ala-tRNA-synth_IIc_edit"/>
</dbReference>
<dbReference type="InterPro" id="IPR009000">
    <property type="entry name" value="Transl_B-barrel_sf"/>
</dbReference>
<dbReference type="InterPro" id="IPR012947">
    <property type="entry name" value="tRNA_SAD"/>
</dbReference>
<dbReference type="NCBIfam" id="TIGR00344">
    <property type="entry name" value="alaS"/>
    <property type="match status" value="1"/>
</dbReference>
<dbReference type="PANTHER" id="PTHR11777:SF9">
    <property type="entry name" value="ALANINE--TRNA LIGASE, CYTOPLASMIC"/>
    <property type="match status" value="1"/>
</dbReference>
<dbReference type="PANTHER" id="PTHR11777">
    <property type="entry name" value="ALANYL-TRNA SYNTHETASE"/>
    <property type="match status" value="1"/>
</dbReference>
<dbReference type="Pfam" id="PF02272">
    <property type="entry name" value="DHHA1"/>
    <property type="match status" value="1"/>
</dbReference>
<dbReference type="Pfam" id="PF01411">
    <property type="entry name" value="tRNA-synt_2c"/>
    <property type="match status" value="1"/>
</dbReference>
<dbReference type="Pfam" id="PF07973">
    <property type="entry name" value="tRNA_SAD"/>
    <property type="match status" value="1"/>
</dbReference>
<dbReference type="PRINTS" id="PR00980">
    <property type="entry name" value="TRNASYNTHALA"/>
</dbReference>
<dbReference type="SMART" id="SM00863">
    <property type="entry name" value="tRNA_SAD"/>
    <property type="match status" value="1"/>
</dbReference>
<dbReference type="SUPFAM" id="SSF55681">
    <property type="entry name" value="Class II aaRS and biotin synthetases"/>
    <property type="match status" value="1"/>
</dbReference>
<dbReference type="SUPFAM" id="SSF101353">
    <property type="entry name" value="Putative anticodon-binding domain of alanyl-tRNA synthetase (AlaRS)"/>
    <property type="match status" value="1"/>
</dbReference>
<dbReference type="SUPFAM" id="SSF55186">
    <property type="entry name" value="ThrRS/AlaRS common domain"/>
    <property type="match status" value="1"/>
</dbReference>
<dbReference type="SUPFAM" id="SSF50447">
    <property type="entry name" value="Translation proteins"/>
    <property type="match status" value="1"/>
</dbReference>
<dbReference type="PROSITE" id="PS50860">
    <property type="entry name" value="AA_TRNA_LIGASE_II_ALA"/>
    <property type="match status" value="1"/>
</dbReference>
<evidence type="ECO:0000255" key="1">
    <source>
        <dbReference type="HAMAP-Rule" id="MF_00036"/>
    </source>
</evidence>
<evidence type="ECO:0000305" key="2"/>
<name>SYA_THEVB</name>
<accession>Q8DH56</accession>
<proteinExistence type="inferred from homology"/>